<proteinExistence type="inferred from homology"/>
<dbReference type="EC" id="4.2.1.41" evidence="1"/>
<dbReference type="EMBL" id="AM420293">
    <property type="protein sequence ID" value="CAL99693.1"/>
    <property type="molecule type" value="Genomic_DNA"/>
</dbReference>
<dbReference type="RefSeq" id="WP_009946509.1">
    <property type="nucleotide sequence ID" value="NC_009142.1"/>
</dbReference>
<dbReference type="SMR" id="A4F6L9"/>
<dbReference type="STRING" id="405948.SACE_0344"/>
<dbReference type="KEGG" id="sen:SACE_0344"/>
<dbReference type="eggNOG" id="COG0329">
    <property type="taxonomic scope" value="Bacteria"/>
</dbReference>
<dbReference type="HOGENOM" id="CLU_049343_5_2_11"/>
<dbReference type="OrthoDB" id="8995637at2"/>
<dbReference type="UniPathway" id="UPA00564">
    <property type="reaction ID" value="UER00628"/>
</dbReference>
<dbReference type="Proteomes" id="UP000006728">
    <property type="component" value="Chromosome"/>
</dbReference>
<dbReference type="GO" id="GO:0008840">
    <property type="term" value="F:4-hydroxy-tetrahydrodipicolinate synthase activity"/>
    <property type="evidence" value="ECO:0007669"/>
    <property type="project" value="TreeGrafter"/>
</dbReference>
<dbReference type="GO" id="GO:0047448">
    <property type="term" value="F:5-dehydro-4-deoxyglucarate dehydratase activity"/>
    <property type="evidence" value="ECO:0007669"/>
    <property type="project" value="UniProtKB-UniRule"/>
</dbReference>
<dbReference type="GO" id="GO:0042838">
    <property type="term" value="P:D-glucarate catabolic process"/>
    <property type="evidence" value="ECO:0007669"/>
    <property type="project" value="UniProtKB-UniRule"/>
</dbReference>
<dbReference type="CDD" id="cd00951">
    <property type="entry name" value="KDGDH"/>
    <property type="match status" value="1"/>
</dbReference>
<dbReference type="Gene3D" id="3.20.20.70">
    <property type="entry name" value="Aldolase class I"/>
    <property type="match status" value="1"/>
</dbReference>
<dbReference type="HAMAP" id="MF_00694">
    <property type="entry name" value="KDGDH"/>
    <property type="match status" value="1"/>
</dbReference>
<dbReference type="InterPro" id="IPR013785">
    <property type="entry name" value="Aldolase_TIM"/>
</dbReference>
<dbReference type="InterPro" id="IPR002220">
    <property type="entry name" value="DapA-like"/>
</dbReference>
<dbReference type="InterPro" id="IPR017655">
    <property type="entry name" value="Dehydro-deoxyglucarate_dehyd"/>
</dbReference>
<dbReference type="NCBIfam" id="TIGR03249">
    <property type="entry name" value="KdgD"/>
    <property type="match status" value="1"/>
</dbReference>
<dbReference type="NCBIfam" id="NF002958">
    <property type="entry name" value="PRK03620.1"/>
    <property type="match status" value="1"/>
</dbReference>
<dbReference type="PANTHER" id="PTHR12128:SF19">
    <property type="entry name" value="5-DEHYDRO-4-DEOXYGLUCARATE DEHYDRATASE 2-RELATED"/>
    <property type="match status" value="1"/>
</dbReference>
<dbReference type="PANTHER" id="PTHR12128">
    <property type="entry name" value="DIHYDRODIPICOLINATE SYNTHASE"/>
    <property type="match status" value="1"/>
</dbReference>
<dbReference type="Pfam" id="PF00701">
    <property type="entry name" value="DHDPS"/>
    <property type="match status" value="1"/>
</dbReference>
<dbReference type="PIRSF" id="PIRSF001365">
    <property type="entry name" value="DHDPS"/>
    <property type="match status" value="1"/>
</dbReference>
<dbReference type="SMART" id="SM01130">
    <property type="entry name" value="DHDPS"/>
    <property type="match status" value="1"/>
</dbReference>
<dbReference type="SUPFAM" id="SSF51569">
    <property type="entry name" value="Aldolase"/>
    <property type="match status" value="1"/>
</dbReference>
<keyword id="KW-0456">Lyase</keyword>
<keyword id="KW-1185">Reference proteome</keyword>
<protein>
    <recommendedName>
        <fullName evidence="1">Probable 5-dehydro-4-deoxyglucarate dehydratase</fullName>
        <ecNumber evidence="1">4.2.1.41</ecNumber>
    </recommendedName>
    <alternativeName>
        <fullName evidence="1">5-keto-4-deoxy-glucarate dehydratase</fullName>
        <shortName evidence="1">KDGDH</shortName>
    </alternativeName>
</protein>
<comment type="catalytic activity">
    <reaction evidence="1">
        <text>5-dehydro-4-deoxy-D-glucarate + H(+) = 2,5-dioxopentanoate + CO2 + H2O</text>
        <dbReference type="Rhea" id="RHEA:24608"/>
        <dbReference type="ChEBI" id="CHEBI:15377"/>
        <dbReference type="ChEBI" id="CHEBI:15378"/>
        <dbReference type="ChEBI" id="CHEBI:16526"/>
        <dbReference type="ChEBI" id="CHEBI:42819"/>
        <dbReference type="ChEBI" id="CHEBI:58136"/>
        <dbReference type="EC" id="4.2.1.41"/>
    </reaction>
</comment>
<comment type="pathway">
    <text evidence="1">Carbohydrate acid metabolism; D-glucarate degradation; 2,5-dioxopentanoate from D-glucarate: step 2/2.</text>
</comment>
<comment type="similarity">
    <text evidence="1">Belongs to the DapA family.</text>
</comment>
<name>KDGD_SACEN</name>
<sequence length="309" mass="33213">MSSYPPHEVAQRLASGLLSFPVTHFRADLTFDEPAYREHIGWLGQFGAAGLFAAGGTGEFFSLTPAEVETVVSAAVREVPDGLPVIAPAGYGTAMAVELARAAERAGAHGILLLPPYLTEADQEGLAAHVRAVCAATGLGVILYSRANAVYTETTVARLAEDCPNLVGFKDGVGDIERMTRLYARLGDRLTYVGGLPTAETFALPYLELGVTTYSSAMFNFVPRFALDFYDAVRRRDHAEVRRRLNDFVLPYCDIRNRRAGYAVSIVKAGMKVIGRPAGPVRSPLTDLDDAELAMLADLVKSMPATGEA</sequence>
<reference key="1">
    <citation type="journal article" date="2007" name="Nat. Biotechnol.">
        <title>Complete genome sequence of the erythromycin-producing bacterium Saccharopolyspora erythraea NRRL23338.</title>
        <authorList>
            <person name="Oliynyk M."/>
            <person name="Samborskyy M."/>
            <person name="Lester J.B."/>
            <person name="Mironenko T."/>
            <person name="Scott N."/>
            <person name="Dickens S."/>
            <person name="Haydock S.F."/>
            <person name="Leadlay P.F."/>
        </authorList>
    </citation>
    <scope>NUCLEOTIDE SEQUENCE [LARGE SCALE GENOMIC DNA]</scope>
    <source>
        <strain>ATCC 11635 / DSM 40517 / JCM 4748 / NBRC 13426 / NCIMB 8594 / NRRL 2338</strain>
    </source>
</reference>
<evidence type="ECO:0000255" key="1">
    <source>
        <dbReference type="HAMAP-Rule" id="MF_00694"/>
    </source>
</evidence>
<feature type="chain" id="PRO_1000045413" description="Probable 5-dehydro-4-deoxyglucarate dehydratase">
    <location>
        <begin position="1"/>
        <end position="309"/>
    </location>
</feature>
<gene>
    <name type="ordered locus">SACE_0344</name>
</gene>
<organism>
    <name type="scientific">Saccharopolyspora erythraea (strain ATCC 11635 / DSM 40517 / JCM 4748 / NBRC 13426 / NCIMB 8594 / NRRL 2338)</name>
    <dbReference type="NCBI Taxonomy" id="405948"/>
    <lineage>
        <taxon>Bacteria</taxon>
        <taxon>Bacillati</taxon>
        <taxon>Actinomycetota</taxon>
        <taxon>Actinomycetes</taxon>
        <taxon>Pseudonocardiales</taxon>
        <taxon>Pseudonocardiaceae</taxon>
        <taxon>Saccharopolyspora</taxon>
    </lineage>
</organism>
<accession>A4F6L9</accession>